<gene>
    <name type="ORF">CG7611</name>
</gene>
<evidence type="ECO:0000250" key="1">
    <source>
        <dbReference type="UniProtKB" id="F1LTR1"/>
    </source>
</evidence>
<evidence type="ECO:0000250" key="2">
    <source>
        <dbReference type="UniProtKB" id="Q9H7D7"/>
    </source>
</evidence>
<evidence type="ECO:0000255" key="3">
    <source>
        <dbReference type="PROSITE-ProRule" id="PRU00058"/>
    </source>
</evidence>
<evidence type="ECO:0000255" key="4">
    <source>
        <dbReference type="PROSITE-ProRule" id="PRU00126"/>
    </source>
</evidence>
<evidence type="ECO:0000256" key="5">
    <source>
        <dbReference type="SAM" id="MobiDB-lite"/>
    </source>
</evidence>
<evidence type="ECO:0000269" key="6">
    <source>
    </source>
</evidence>
<comment type="function">
    <text evidence="2">G-beta-like protein involved in cell signal transduction (By similarity).</text>
</comment>
<comment type="subcellular location">
    <subcellularLocation>
        <location evidence="2">Cytoplasm</location>
    </subcellularLocation>
    <subcellularLocation>
        <location evidence="1">Mitochondrion</location>
    </subcellularLocation>
</comment>
<name>WDR26_DROME</name>
<sequence>MQSTSSTSSGSCSRPLEGSTLNSGGSAENVARDGGSGDDSVGIGDENPSGSSAATNGHDSKHNGFIVNNNGSSSRIVDGENNRENTSCSGVQLDKSNQEIIRLIGQYLHDVGLDKSVQTLMLESGCYLEHPSATKFREHVLMGDWSKADSDLKDLEPLIDNGKLATITEMKFILLEQKYLEHLDDGNPLDALHVLRSELTPLQHNITRVHQLSSYMMCSTNQDLYQRAKWEGKGILSRALVMERLQTFMPPSVMMSPRRLRTLLQQAVELQSQHCPCHDMAWETNLETVSLLTDHCCTTDGFPMQTIQILTDHCDEVWFCKFSPDGLKLATGSKDSTVIIWDVDPYKLTLKHRRVLDGQAQLSVSFVSWSPDSKLILVGGTEDSHELYIWNVDDGKLVVKFSQSLEDSLACGAFSRDGARFVCGGQKGQLYLCDLNGTIVDSWEGVRVNSIAFRADNKTILAADNHYRIRGYNFDSPRSDFDILREPHPIMTFSINSADRLALLNVSNQGLHLWDIEDKCLVRRFQGIRQSNFAIHSCFGGVNESFVASGSEDKVVYIWHIKREEPLAKLAGHTKTVNCVSWNPVYPSLLASASDDATVRIWGPKPNGSSATTESDDCSSSSSSSSWNMT</sequence>
<dbReference type="EMBL" id="AE014296">
    <property type="protein sequence ID" value="AAF51739.2"/>
    <property type="molecule type" value="Genomic_DNA"/>
</dbReference>
<dbReference type="EMBL" id="AE014296">
    <property type="protein sequence ID" value="AAG22181.1"/>
    <property type="molecule type" value="Genomic_DNA"/>
</dbReference>
<dbReference type="EMBL" id="AE014296">
    <property type="protein sequence ID" value="AAG22182.2"/>
    <property type="molecule type" value="Genomic_DNA"/>
</dbReference>
<dbReference type="EMBL" id="AE014296">
    <property type="protein sequence ID" value="AAN12172.1"/>
    <property type="molecule type" value="Genomic_DNA"/>
</dbReference>
<dbReference type="EMBL" id="AE014296">
    <property type="protein sequence ID" value="AAN12173.1"/>
    <property type="molecule type" value="Genomic_DNA"/>
</dbReference>
<dbReference type="EMBL" id="AE014296">
    <property type="protein sequence ID" value="AAN12174.1"/>
    <property type="molecule type" value="Genomic_DNA"/>
</dbReference>
<dbReference type="EMBL" id="AE014296">
    <property type="protein sequence ID" value="AAN12175.1"/>
    <property type="molecule type" value="Genomic_DNA"/>
</dbReference>
<dbReference type="EMBL" id="AY069717">
    <property type="protein sequence ID" value="AAL39862.1"/>
    <property type="molecule type" value="mRNA"/>
</dbReference>
<dbReference type="RefSeq" id="NP_001163489.1">
    <property type="nucleotide sequence ID" value="NM_001170018.2"/>
</dbReference>
<dbReference type="RefSeq" id="NP_649326.1">
    <property type="nucleotide sequence ID" value="NM_141069.4"/>
</dbReference>
<dbReference type="RefSeq" id="NP_730644.1">
    <property type="nucleotide sequence ID" value="NM_168913.3"/>
</dbReference>
<dbReference type="RefSeq" id="NP_730645.1">
    <property type="nucleotide sequence ID" value="NM_168914.3"/>
</dbReference>
<dbReference type="RefSeq" id="NP_730646.1">
    <property type="nucleotide sequence ID" value="NM_168915.3"/>
</dbReference>
<dbReference type="RefSeq" id="NP_730647.1">
    <property type="nucleotide sequence ID" value="NM_168916.3"/>
</dbReference>
<dbReference type="RefSeq" id="NP_730648.1">
    <property type="nucleotide sequence ID" value="NM_168917.3"/>
</dbReference>
<dbReference type="RefSeq" id="NP_730649.1">
    <property type="nucleotide sequence ID" value="NM_168918.3"/>
</dbReference>
<dbReference type="RefSeq" id="NP_730650.1">
    <property type="nucleotide sequence ID" value="NM_168919.3"/>
</dbReference>
<dbReference type="SMR" id="Q7K0L4"/>
<dbReference type="BioGRID" id="65631">
    <property type="interactions" value="22"/>
</dbReference>
<dbReference type="FunCoup" id="Q7K0L4">
    <property type="interactions" value="1432"/>
</dbReference>
<dbReference type="IntAct" id="Q7K0L4">
    <property type="interactions" value="21"/>
</dbReference>
<dbReference type="STRING" id="7227.FBpp0290415"/>
<dbReference type="iPTMnet" id="Q7K0L4"/>
<dbReference type="PaxDb" id="7227-FBpp0078015"/>
<dbReference type="DNASU" id="40386"/>
<dbReference type="EnsemblMetazoa" id="FBtr0078359">
    <property type="protein sequence ID" value="FBpp0078015"/>
    <property type="gene ID" value="FBgn0037094"/>
</dbReference>
<dbReference type="EnsemblMetazoa" id="FBtr0078361">
    <property type="protein sequence ID" value="FBpp0078017"/>
    <property type="gene ID" value="FBgn0037094"/>
</dbReference>
<dbReference type="EnsemblMetazoa" id="FBtr0078362">
    <property type="protein sequence ID" value="FBpp0078018"/>
    <property type="gene ID" value="FBgn0037094"/>
</dbReference>
<dbReference type="EnsemblMetazoa" id="FBtr0078363">
    <property type="protein sequence ID" value="FBpp0078019"/>
    <property type="gene ID" value="FBgn0037094"/>
</dbReference>
<dbReference type="EnsemblMetazoa" id="FBtr0078364">
    <property type="protein sequence ID" value="FBpp0078020"/>
    <property type="gene ID" value="FBgn0037094"/>
</dbReference>
<dbReference type="EnsemblMetazoa" id="FBtr0078365">
    <property type="protein sequence ID" value="FBpp0078021"/>
    <property type="gene ID" value="FBgn0037094"/>
</dbReference>
<dbReference type="EnsemblMetazoa" id="FBtr0078366">
    <property type="protein sequence ID" value="FBpp0078022"/>
    <property type="gene ID" value="FBgn0037094"/>
</dbReference>
<dbReference type="EnsemblMetazoa" id="FBtr0301197">
    <property type="protein sequence ID" value="FBpp0290415"/>
    <property type="gene ID" value="FBgn0037094"/>
</dbReference>
<dbReference type="EnsemblMetazoa" id="FBtr0301198">
    <property type="protein sequence ID" value="FBpp0290416"/>
    <property type="gene ID" value="FBgn0037094"/>
</dbReference>
<dbReference type="GeneID" id="40386"/>
<dbReference type="KEGG" id="dme:Dmel_CG7611"/>
<dbReference type="AGR" id="FB:FBgn0037094"/>
<dbReference type="FlyBase" id="FBgn0037094">
    <property type="gene designation" value="CG7611"/>
</dbReference>
<dbReference type="VEuPathDB" id="VectorBase:FBgn0037094"/>
<dbReference type="eggNOG" id="KOG0293">
    <property type="taxonomic scope" value="Eukaryota"/>
</dbReference>
<dbReference type="GeneTree" id="ENSGT00940000153634"/>
<dbReference type="HOGENOM" id="CLU_000288_57_25_1"/>
<dbReference type="InParanoid" id="Q7K0L4"/>
<dbReference type="OMA" id="GHISGCV"/>
<dbReference type="OrthoDB" id="972532at2759"/>
<dbReference type="PhylomeDB" id="Q7K0L4"/>
<dbReference type="Reactome" id="R-DME-9861718">
    <property type="pathway name" value="Regulation of pyruvate metabolism"/>
</dbReference>
<dbReference type="BioGRID-ORCS" id="40386">
    <property type="hits" value="0 hits in 1 CRISPR screen"/>
</dbReference>
<dbReference type="GenomeRNAi" id="40386"/>
<dbReference type="PRO" id="PR:Q7K0L4"/>
<dbReference type="Proteomes" id="UP000000803">
    <property type="component" value="Chromosome 3L"/>
</dbReference>
<dbReference type="Bgee" id="FBgn0037094">
    <property type="expression patterns" value="Expressed in enterocyte of posterior adult midgut epithelium (Drosophila) in digestive tract and 226 other cell types or tissues"/>
</dbReference>
<dbReference type="ExpressionAtlas" id="Q7K0L4">
    <property type="expression patterns" value="baseline and differential"/>
</dbReference>
<dbReference type="GO" id="GO:0005737">
    <property type="term" value="C:cytoplasm"/>
    <property type="evidence" value="ECO:0000250"/>
    <property type="project" value="UniProtKB"/>
</dbReference>
<dbReference type="GO" id="GO:0034657">
    <property type="term" value="C:GID complex"/>
    <property type="evidence" value="ECO:0000314"/>
    <property type="project" value="FlyBase"/>
</dbReference>
<dbReference type="GO" id="GO:0005739">
    <property type="term" value="C:mitochondrion"/>
    <property type="evidence" value="ECO:0007669"/>
    <property type="project" value="UniProtKB-SubCell"/>
</dbReference>
<dbReference type="GO" id="GO:0043161">
    <property type="term" value="P:proteasome-mediated ubiquitin-dependent protein catabolic process"/>
    <property type="evidence" value="ECO:0000318"/>
    <property type="project" value="GO_Central"/>
</dbReference>
<dbReference type="FunFam" id="2.130.10.10:FF:000087">
    <property type="entry name" value="WD repeat-containing protein 26 homolog"/>
    <property type="match status" value="1"/>
</dbReference>
<dbReference type="Gene3D" id="2.130.10.10">
    <property type="entry name" value="YVTN repeat-like/Quinoprotein amine dehydrogenase"/>
    <property type="match status" value="1"/>
</dbReference>
<dbReference type="InterPro" id="IPR006595">
    <property type="entry name" value="CTLH_C"/>
</dbReference>
<dbReference type="InterPro" id="IPR020472">
    <property type="entry name" value="G-protein_beta_WD-40_rep"/>
</dbReference>
<dbReference type="InterPro" id="IPR006594">
    <property type="entry name" value="LisH"/>
</dbReference>
<dbReference type="InterPro" id="IPR054532">
    <property type="entry name" value="TPL_SMU1_LisH-like"/>
</dbReference>
<dbReference type="InterPro" id="IPR015943">
    <property type="entry name" value="WD40/YVTN_repeat-like_dom_sf"/>
</dbReference>
<dbReference type="InterPro" id="IPR019775">
    <property type="entry name" value="WD40_repeat_CS"/>
</dbReference>
<dbReference type="InterPro" id="IPR036322">
    <property type="entry name" value="WD40_repeat_dom_sf"/>
</dbReference>
<dbReference type="InterPro" id="IPR001680">
    <property type="entry name" value="WD40_rpt"/>
</dbReference>
<dbReference type="InterPro" id="IPR051350">
    <property type="entry name" value="WD_repeat-ST_regulator"/>
</dbReference>
<dbReference type="PANTHER" id="PTHR22838">
    <property type="entry name" value="WD REPEAT PROTEIN 26-RELATED"/>
    <property type="match status" value="1"/>
</dbReference>
<dbReference type="PANTHER" id="PTHR22838:SF0">
    <property type="entry name" value="WD REPEAT-CONTAINING PROTEIN 26"/>
    <property type="match status" value="1"/>
</dbReference>
<dbReference type="Pfam" id="PF17814">
    <property type="entry name" value="LisH_TPL"/>
    <property type="match status" value="1"/>
</dbReference>
<dbReference type="Pfam" id="PF00400">
    <property type="entry name" value="WD40"/>
    <property type="match status" value="4"/>
</dbReference>
<dbReference type="PRINTS" id="PR00320">
    <property type="entry name" value="GPROTEINBRPT"/>
</dbReference>
<dbReference type="SMART" id="SM00668">
    <property type="entry name" value="CTLH"/>
    <property type="match status" value="1"/>
</dbReference>
<dbReference type="SMART" id="SM00667">
    <property type="entry name" value="LisH"/>
    <property type="match status" value="1"/>
</dbReference>
<dbReference type="SMART" id="SM00320">
    <property type="entry name" value="WD40"/>
    <property type="match status" value="6"/>
</dbReference>
<dbReference type="SUPFAM" id="SSF50978">
    <property type="entry name" value="WD40 repeat-like"/>
    <property type="match status" value="1"/>
</dbReference>
<dbReference type="PROSITE" id="PS50897">
    <property type="entry name" value="CTLH"/>
    <property type="match status" value="1"/>
</dbReference>
<dbReference type="PROSITE" id="PS50896">
    <property type="entry name" value="LISH"/>
    <property type="match status" value="1"/>
</dbReference>
<dbReference type="PROSITE" id="PS00678">
    <property type="entry name" value="WD_REPEATS_1"/>
    <property type="match status" value="1"/>
</dbReference>
<dbReference type="PROSITE" id="PS50082">
    <property type="entry name" value="WD_REPEATS_2"/>
    <property type="match status" value="3"/>
</dbReference>
<dbReference type="PROSITE" id="PS50294">
    <property type="entry name" value="WD_REPEATS_REGION"/>
    <property type="match status" value="1"/>
</dbReference>
<accession>Q7K0L4</accession>
<accession>A4V292</accession>
<feature type="chain" id="PRO_0000280739" description="WD repeat-containing protein 26 homolog">
    <location>
        <begin position="1"/>
        <end position="630"/>
    </location>
</feature>
<feature type="domain" description="LisH" evidence="4">
    <location>
        <begin position="96"/>
        <end position="128"/>
    </location>
</feature>
<feature type="domain" description="CTLH" evidence="3">
    <location>
        <begin position="129"/>
        <end position="190"/>
    </location>
</feature>
<feature type="repeat" description="WD 1">
    <location>
        <begin position="312"/>
        <end position="351"/>
    </location>
</feature>
<feature type="repeat" description="WD 2">
    <location>
        <begin position="359"/>
        <end position="400"/>
    </location>
</feature>
<feature type="repeat" description="WD 3">
    <location>
        <begin position="404"/>
        <end position="443"/>
    </location>
</feature>
<feature type="repeat" description="WD 4">
    <location>
        <begin position="445"/>
        <end position="482"/>
    </location>
</feature>
<feature type="repeat" description="WD 5">
    <location>
        <begin position="485"/>
        <end position="524"/>
    </location>
</feature>
<feature type="repeat" description="WD 6">
    <location>
        <begin position="529"/>
        <end position="569"/>
    </location>
</feature>
<feature type="repeat" description="WD 7">
    <location>
        <begin position="572"/>
        <end position="612"/>
    </location>
</feature>
<feature type="region of interest" description="Disordered" evidence="5">
    <location>
        <begin position="1"/>
        <end position="90"/>
    </location>
</feature>
<feature type="region of interest" description="Disordered" evidence="5">
    <location>
        <begin position="604"/>
        <end position="630"/>
    </location>
</feature>
<feature type="compositionally biased region" description="Low complexity" evidence="5">
    <location>
        <begin position="1"/>
        <end position="13"/>
    </location>
</feature>
<feature type="compositionally biased region" description="Polar residues" evidence="5">
    <location>
        <begin position="48"/>
        <end position="57"/>
    </location>
</feature>
<feature type="compositionally biased region" description="Polar residues" evidence="5">
    <location>
        <begin position="66"/>
        <end position="75"/>
    </location>
</feature>
<feature type="compositionally biased region" description="Low complexity" evidence="5">
    <location>
        <begin position="609"/>
        <end position="630"/>
    </location>
</feature>
<feature type="modified residue" description="Phosphoserine" evidence="6">
    <location>
        <position position="36"/>
    </location>
</feature>
<feature type="modified residue" description="Phosphoserine" evidence="6">
    <location>
        <position position="40"/>
    </location>
</feature>
<keyword id="KW-0963">Cytoplasm</keyword>
<keyword id="KW-0496">Mitochondrion</keyword>
<keyword id="KW-0597">Phosphoprotein</keyword>
<keyword id="KW-1185">Reference proteome</keyword>
<keyword id="KW-0677">Repeat</keyword>
<keyword id="KW-0853">WD repeat</keyword>
<protein>
    <recommendedName>
        <fullName>WD repeat-containing protein 26 homolog</fullName>
    </recommendedName>
</protein>
<reference key="1">
    <citation type="journal article" date="2000" name="Science">
        <title>The genome sequence of Drosophila melanogaster.</title>
        <authorList>
            <person name="Adams M.D."/>
            <person name="Celniker S.E."/>
            <person name="Holt R.A."/>
            <person name="Evans C.A."/>
            <person name="Gocayne J.D."/>
            <person name="Amanatides P.G."/>
            <person name="Scherer S.E."/>
            <person name="Li P.W."/>
            <person name="Hoskins R.A."/>
            <person name="Galle R.F."/>
            <person name="George R.A."/>
            <person name="Lewis S.E."/>
            <person name="Richards S."/>
            <person name="Ashburner M."/>
            <person name="Henderson S.N."/>
            <person name="Sutton G.G."/>
            <person name="Wortman J.R."/>
            <person name="Yandell M.D."/>
            <person name="Zhang Q."/>
            <person name="Chen L.X."/>
            <person name="Brandon R.C."/>
            <person name="Rogers Y.-H.C."/>
            <person name="Blazej R.G."/>
            <person name="Champe M."/>
            <person name="Pfeiffer B.D."/>
            <person name="Wan K.H."/>
            <person name="Doyle C."/>
            <person name="Baxter E.G."/>
            <person name="Helt G."/>
            <person name="Nelson C.R."/>
            <person name="Miklos G.L.G."/>
            <person name="Abril J.F."/>
            <person name="Agbayani A."/>
            <person name="An H.-J."/>
            <person name="Andrews-Pfannkoch C."/>
            <person name="Baldwin D."/>
            <person name="Ballew R.M."/>
            <person name="Basu A."/>
            <person name="Baxendale J."/>
            <person name="Bayraktaroglu L."/>
            <person name="Beasley E.M."/>
            <person name="Beeson K.Y."/>
            <person name="Benos P.V."/>
            <person name="Berman B.P."/>
            <person name="Bhandari D."/>
            <person name="Bolshakov S."/>
            <person name="Borkova D."/>
            <person name="Botchan M.R."/>
            <person name="Bouck J."/>
            <person name="Brokstein P."/>
            <person name="Brottier P."/>
            <person name="Burtis K.C."/>
            <person name="Busam D.A."/>
            <person name="Butler H."/>
            <person name="Cadieu E."/>
            <person name="Center A."/>
            <person name="Chandra I."/>
            <person name="Cherry J.M."/>
            <person name="Cawley S."/>
            <person name="Dahlke C."/>
            <person name="Davenport L.B."/>
            <person name="Davies P."/>
            <person name="de Pablos B."/>
            <person name="Delcher A."/>
            <person name="Deng Z."/>
            <person name="Mays A.D."/>
            <person name="Dew I."/>
            <person name="Dietz S.M."/>
            <person name="Dodson K."/>
            <person name="Doup L.E."/>
            <person name="Downes M."/>
            <person name="Dugan-Rocha S."/>
            <person name="Dunkov B.C."/>
            <person name="Dunn P."/>
            <person name="Durbin K.J."/>
            <person name="Evangelista C.C."/>
            <person name="Ferraz C."/>
            <person name="Ferriera S."/>
            <person name="Fleischmann W."/>
            <person name="Fosler C."/>
            <person name="Gabrielian A.E."/>
            <person name="Garg N.S."/>
            <person name="Gelbart W.M."/>
            <person name="Glasser K."/>
            <person name="Glodek A."/>
            <person name="Gong F."/>
            <person name="Gorrell J.H."/>
            <person name="Gu Z."/>
            <person name="Guan P."/>
            <person name="Harris M."/>
            <person name="Harris N.L."/>
            <person name="Harvey D.A."/>
            <person name="Heiman T.J."/>
            <person name="Hernandez J.R."/>
            <person name="Houck J."/>
            <person name="Hostin D."/>
            <person name="Houston K.A."/>
            <person name="Howland T.J."/>
            <person name="Wei M.-H."/>
            <person name="Ibegwam C."/>
            <person name="Jalali M."/>
            <person name="Kalush F."/>
            <person name="Karpen G.H."/>
            <person name="Ke Z."/>
            <person name="Kennison J.A."/>
            <person name="Ketchum K.A."/>
            <person name="Kimmel B.E."/>
            <person name="Kodira C.D."/>
            <person name="Kraft C.L."/>
            <person name="Kravitz S."/>
            <person name="Kulp D."/>
            <person name="Lai Z."/>
            <person name="Lasko P."/>
            <person name="Lei Y."/>
            <person name="Levitsky A.A."/>
            <person name="Li J.H."/>
            <person name="Li Z."/>
            <person name="Liang Y."/>
            <person name="Lin X."/>
            <person name="Liu X."/>
            <person name="Mattei B."/>
            <person name="McIntosh T.C."/>
            <person name="McLeod M.P."/>
            <person name="McPherson D."/>
            <person name="Merkulov G."/>
            <person name="Milshina N.V."/>
            <person name="Mobarry C."/>
            <person name="Morris J."/>
            <person name="Moshrefi A."/>
            <person name="Mount S.M."/>
            <person name="Moy M."/>
            <person name="Murphy B."/>
            <person name="Murphy L."/>
            <person name="Muzny D.M."/>
            <person name="Nelson D.L."/>
            <person name="Nelson D.R."/>
            <person name="Nelson K.A."/>
            <person name="Nixon K."/>
            <person name="Nusskern D.R."/>
            <person name="Pacleb J.M."/>
            <person name="Palazzolo M."/>
            <person name="Pittman G.S."/>
            <person name="Pan S."/>
            <person name="Pollard J."/>
            <person name="Puri V."/>
            <person name="Reese M.G."/>
            <person name="Reinert K."/>
            <person name="Remington K."/>
            <person name="Saunders R.D.C."/>
            <person name="Scheeler F."/>
            <person name="Shen H."/>
            <person name="Shue B.C."/>
            <person name="Siden-Kiamos I."/>
            <person name="Simpson M."/>
            <person name="Skupski M.P."/>
            <person name="Smith T.J."/>
            <person name="Spier E."/>
            <person name="Spradling A.C."/>
            <person name="Stapleton M."/>
            <person name="Strong R."/>
            <person name="Sun E."/>
            <person name="Svirskas R."/>
            <person name="Tector C."/>
            <person name="Turner R."/>
            <person name="Venter E."/>
            <person name="Wang A.H."/>
            <person name="Wang X."/>
            <person name="Wang Z.-Y."/>
            <person name="Wassarman D.A."/>
            <person name="Weinstock G.M."/>
            <person name="Weissenbach J."/>
            <person name="Williams S.M."/>
            <person name="Woodage T."/>
            <person name="Worley K.C."/>
            <person name="Wu D."/>
            <person name="Yang S."/>
            <person name="Yao Q.A."/>
            <person name="Ye J."/>
            <person name="Yeh R.-F."/>
            <person name="Zaveri J.S."/>
            <person name="Zhan M."/>
            <person name="Zhang G."/>
            <person name="Zhao Q."/>
            <person name="Zheng L."/>
            <person name="Zheng X.H."/>
            <person name="Zhong F.N."/>
            <person name="Zhong W."/>
            <person name="Zhou X."/>
            <person name="Zhu S.C."/>
            <person name="Zhu X."/>
            <person name="Smith H.O."/>
            <person name="Gibbs R.A."/>
            <person name="Myers E.W."/>
            <person name="Rubin G.M."/>
            <person name="Venter J.C."/>
        </authorList>
    </citation>
    <scope>NUCLEOTIDE SEQUENCE [LARGE SCALE GENOMIC DNA]</scope>
    <source>
        <strain>Berkeley</strain>
    </source>
</reference>
<reference key="2">
    <citation type="journal article" date="2002" name="Genome Biol.">
        <title>Annotation of the Drosophila melanogaster euchromatic genome: a systematic review.</title>
        <authorList>
            <person name="Misra S."/>
            <person name="Crosby M.A."/>
            <person name="Mungall C.J."/>
            <person name="Matthews B.B."/>
            <person name="Campbell K.S."/>
            <person name="Hradecky P."/>
            <person name="Huang Y."/>
            <person name="Kaminker J.S."/>
            <person name="Millburn G.H."/>
            <person name="Prochnik S.E."/>
            <person name="Smith C.D."/>
            <person name="Tupy J.L."/>
            <person name="Whitfield E.J."/>
            <person name="Bayraktaroglu L."/>
            <person name="Berman B.P."/>
            <person name="Bettencourt B.R."/>
            <person name="Celniker S.E."/>
            <person name="de Grey A.D.N.J."/>
            <person name="Drysdale R.A."/>
            <person name="Harris N.L."/>
            <person name="Richter J."/>
            <person name="Russo S."/>
            <person name="Schroeder A.J."/>
            <person name="Shu S.Q."/>
            <person name="Stapleton M."/>
            <person name="Yamada C."/>
            <person name="Ashburner M."/>
            <person name="Gelbart W.M."/>
            <person name="Rubin G.M."/>
            <person name="Lewis S.E."/>
        </authorList>
    </citation>
    <scope>GENOME REANNOTATION</scope>
    <source>
        <strain>Berkeley</strain>
    </source>
</reference>
<reference key="3">
    <citation type="journal article" date="2002" name="Genome Biol.">
        <title>A Drosophila full-length cDNA resource.</title>
        <authorList>
            <person name="Stapleton M."/>
            <person name="Carlson J.W."/>
            <person name="Brokstein P."/>
            <person name="Yu C."/>
            <person name="Champe M."/>
            <person name="George R.A."/>
            <person name="Guarin H."/>
            <person name="Kronmiller B."/>
            <person name="Pacleb J.M."/>
            <person name="Park S."/>
            <person name="Wan K.H."/>
            <person name="Rubin G.M."/>
            <person name="Celniker S.E."/>
        </authorList>
    </citation>
    <scope>NUCLEOTIDE SEQUENCE [LARGE SCALE MRNA]</scope>
    <source>
        <strain>Berkeley</strain>
        <tissue>Larva</tissue>
    </source>
</reference>
<reference key="4">
    <citation type="journal article" date="2006" name="Nat. Cell Biol.">
        <title>CUL4-DDB1 ubiquitin ligase interacts with multiple WD40-repeat proteins and regulates histone methylation.</title>
        <authorList>
            <person name="Higa L.A."/>
            <person name="Wu M."/>
            <person name="Ye T."/>
            <person name="Kobayashi R."/>
            <person name="Sun H."/>
            <person name="Zhang H."/>
        </authorList>
    </citation>
    <scope>IDENTIFICATION</scope>
</reference>
<reference key="5">
    <citation type="journal article" date="2008" name="J. Proteome Res.">
        <title>Phosphoproteome analysis of Drosophila melanogaster embryos.</title>
        <authorList>
            <person name="Zhai B."/>
            <person name="Villen J."/>
            <person name="Beausoleil S.A."/>
            <person name="Mintseris J."/>
            <person name="Gygi S.P."/>
        </authorList>
    </citation>
    <scope>PHOSPHORYLATION [LARGE SCALE ANALYSIS] AT SER-36 AND SER-40</scope>
    <scope>IDENTIFICATION BY MASS SPECTROMETRY</scope>
    <source>
        <tissue>Embryo</tissue>
    </source>
</reference>
<proteinExistence type="evidence at protein level"/>
<organism>
    <name type="scientific">Drosophila melanogaster</name>
    <name type="common">Fruit fly</name>
    <dbReference type="NCBI Taxonomy" id="7227"/>
    <lineage>
        <taxon>Eukaryota</taxon>
        <taxon>Metazoa</taxon>
        <taxon>Ecdysozoa</taxon>
        <taxon>Arthropoda</taxon>
        <taxon>Hexapoda</taxon>
        <taxon>Insecta</taxon>
        <taxon>Pterygota</taxon>
        <taxon>Neoptera</taxon>
        <taxon>Endopterygota</taxon>
        <taxon>Diptera</taxon>
        <taxon>Brachycera</taxon>
        <taxon>Muscomorpha</taxon>
        <taxon>Ephydroidea</taxon>
        <taxon>Drosophilidae</taxon>
        <taxon>Drosophila</taxon>
        <taxon>Sophophora</taxon>
    </lineage>
</organism>